<proteinExistence type="evidence at protein level"/>
<keyword id="KW-0002">3D-structure</keyword>
<keyword id="KW-0025">Alternative splicing</keyword>
<keyword id="KW-0202">Cytokine</keyword>
<keyword id="KW-0339">Growth factor</keyword>
<keyword id="KW-0582">Pharmaceutical</keyword>
<keyword id="KW-1267">Proteomics identification</keyword>
<keyword id="KW-1185">Reference proteome</keyword>
<keyword id="KW-0964">Secreted</keyword>
<keyword id="KW-0732">Signal</keyword>
<evidence type="ECO:0000250" key="1">
    <source>
        <dbReference type="UniProtKB" id="P47873"/>
    </source>
</evidence>
<evidence type="ECO:0000255" key="2"/>
<evidence type="ECO:0000269" key="3">
    <source>
    </source>
</evidence>
<evidence type="ECO:0000269" key="4">
    <source>
    </source>
</evidence>
<evidence type="ECO:0000269" key="5">
    <source>
    </source>
</evidence>
<evidence type="ECO:0000269" key="6">
    <source>
    </source>
</evidence>
<evidence type="ECO:0000269" key="7">
    <source ref="4"/>
</evidence>
<evidence type="ECO:0000303" key="8">
    <source>
    </source>
</evidence>
<evidence type="ECO:0000303" key="9">
    <source>
    </source>
</evidence>
<evidence type="ECO:0000305" key="10"/>
<evidence type="ECO:0000312" key="11">
    <source>
        <dbReference type="HGNC" id="HGNC:5966"/>
    </source>
</evidence>
<evidence type="ECO:0007829" key="12">
    <source>
        <dbReference type="PDB" id="8DPV"/>
    </source>
</evidence>
<evidence type="ECO:0007829" key="13">
    <source>
        <dbReference type="PDB" id="8DPW"/>
    </source>
</evidence>
<evidence type="ECO:0007829" key="14">
    <source>
        <dbReference type="PDB" id="8QY4"/>
    </source>
</evidence>
<reference key="1">
    <citation type="journal article" date="1990" name="Proc. Natl. Acad. Sci. U.S.A.">
        <title>Molecular cloning of a cDNA encoding interleukin 11, a stromal cell-derived lymphopoietic and hematopoietic cytokine.</title>
        <authorList>
            <person name="Paul S.R."/>
            <person name="Bennett F."/>
            <person name="Calvetti J.A."/>
            <person name="Kelleher K."/>
            <person name="Wood C.R."/>
            <person name="O'Hara R.M. Jr."/>
            <person name="Leary A.C."/>
            <person name="Sibley B.S."/>
            <person name="Clark S.C."/>
            <person name="Williams D.A."/>
            <person name="Yang Y.-C."/>
        </authorList>
    </citation>
    <scope>NUCLEOTIDE SEQUENCE [MRNA] (ISOFORM 1)</scope>
    <scope>FUNCTION</scope>
    <scope>SUBCELLULAR LOCATION</scope>
</reference>
<reference key="2">
    <citation type="journal article" date="1991" name="FEBS Lett.">
        <title>Molecular cloning of cDNA encoding adipogenesis inhibitory factor and identity with interleukin-11.</title>
        <authorList>
            <person name="Kawashima I."/>
            <person name="Ohsumi J."/>
            <person name="Mita-Honjo K."/>
            <person name="Shimoda-Takano K."/>
            <person name="Ishikawa H."/>
            <person name="Sakakibara S."/>
            <person name="Miyadai K."/>
            <person name="Takiguchi Y."/>
        </authorList>
    </citation>
    <scope>NUCLEOTIDE SEQUENCE [MRNA] (ISOFORM 1)</scope>
    <scope>SUBCELLULAR LOCATION</scope>
    <source>
        <tissue>Bone marrow</tissue>
    </source>
</reference>
<reference key="3">
    <citation type="journal article" date="1992" name="Genomics">
        <title>Genomic sequence and chromosomal location of human interleukin-11 gene (IL11).</title>
        <authorList>
            <person name="McKinley D."/>
            <person name="Wu Q."/>
            <person name="Yang-Feng T."/>
            <person name="Yang Y.C."/>
        </authorList>
    </citation>
    <scope>NUCLEOTIDE SEQUENCE [GENOMIC DNA] (ISOFORM 1)</scope>
</reference>
<reference key="4">
    <citation type="submission" date="2002-12" db="EMBL/GenBank/DDBJ databases">
        <authorList>
            <consortium name="SeattleSNPs variation discovery resource"/>
        </authorList>
    </citation>
    <scope>NUCLEOTIDE SEQUENCE [GENOMIC DNA] (ISOFORM 1)</scope>
    <scope>VARIANTS MET-108 AND HIS-112</scope>
</reference>
<reference key="5">
    <citation type="journal article" date="2004" name="Nat. Genet.">
        <title>Complete sequencing and characterization of 21,243 full-length human cDNAs.</title>
        <authorList>
            <person name="Ota T."/>
            <person name="Suzuki Y."/>
            <person name="Nishikawa T."/>
            <person name="Otsuki T."/>
            <person name="Sugiyama T."/>
            <person name="Irie R."/>
            <person name="Wakamatsu A."/>
            <person name="Hayashi K."/>
            <person name="Sato H."/>
            <person name="Nagai K."/>
            <person name="Kimura K."/>
            <person name="Makita H."/>
            <person name="Sekine M."/>
            <person name="Obayashi M."/>
            <person name="Nishi T."/>
            <person name="Shibahara T."/>
            <person name="Tanaka T."/>
            <person name="Ishii S."/>
            <person name="Yamamoto J."/>
            <person name="Saito K."/>
            <person name="Kawai Y."/>
            <person name="Isono Y."/>
            <person name="Nakamura Y."/>
            <person name="Nagahari K."/>
            <person name="Murakami K."/>
            <person name="Yasuda T."/>
            <person name="Iwayanagi T."/>
            <person name="Wagatsuma M."/>
            <person name="Shiratori A."/>
            <person name="Sudo H."/>
            <person name="Hosoiri T."/>
            <person name="Kaku Y."/>
            <person name="Kodaira H."/>
            <person name="Kondo H."/>
            <person name="Sugawara M."/>
            <person name="Takahashi M."/>
            <person name="Kanda K."/>
            <person name="Yokoi T."/>
            <person name="Furuya T."/>
            <person name="Kikkawa E."/>
            <person name="Omura Y."/>
            <person name="Abe K."/>
            <person name="Kamihara K."/>
            <person name="Katsuta N."/>
            <person name="Sato K."/>
            <person name="Tanikawa M."/>
            <person name="Yamazaki M."/>
            <person name="Ninomiya K."/>
            <person name="Ishibashi T."/>
            <person name="Yamashita H."/>
            <person name="Murakawa K."/>
            <person name="Fujimori K."/>
            <person name="Tanai H."/>
            <person name="Kimata M."/>
            <person name="Watanabe M."/>
            <person name="Hiraoka S."/>
            <person name="Chiba Y."/>
            <person name="Ishida S."/>
            <person name="Ono Y."/>
            <person name="Takiguchi S."/>
            <person name="Watanabe S."/>
            <person name="Yosida M."/>
            <person name="Hotuta T."/>
            <person name="Kusano J."/>
            <person name="Kanehori K."/>
            <person name="Takahashi-Fujii A."/>
            <person name="Hara H."/>
            <person name="Tanase T.-O."/>
            <person name="Nomura Y."/>
            <person name="Togiya S."/>
            <person name="Komai F."/>
            <person name="Hara R."/>
            <person name="Takeuchi K."/>
            <person name="Arita M."/>
            <person name="Imose N."/>
            <person name="Musashino K."/>
            <person name="Yuuki H."/>
            <person name="Oshima A."/>
            <person name="Sasaki N."/>
            <person name="Aotsuka S."/>
            <person name="Yoshikawa Y."/>
            <person name="Matsunawa H."/>
            <person name="Ichihara T."/>
            <person name="Shiohata N."/>
            <person name="Sano S."/>
            <person name="Moriya S."/>
            <person name="Momiyama H."/>
            <person name="Satoh N."/>
            <person name="Takami S."/>
            <person name="Terashima Y."/>
            <person name="Suzuki O."/>
            <person name="Nakagawa S."/>
            <person name="Senoh A."/>
            <person name="Mizoguchi H."/>
            <person name="Goto Y."/>
            <person name="Shimizu F."/>
            <person name="Wakebe H."/>
            <person name="Hishigaki H."/>
            <person name="Watanabe T."/>
            <person name="Sugiyama A."/>
            <person name="Takemoto M."/>
            <person name="Kawakami B."/>
            <person name="Yamazaki M."/>
            <person name="Watanabe K."/>
            <person name="Kumagai A."/>
            <person name="Itakura S."/>
            <person name="Fukuzumi Y."/>
            <person name="Fujimori Y."/>
            <person name="Komiyama M."/>
            <person name="Tashiro H."/>
            <person name="Tanigami A."/>
            <person name="Fujiwara T."/>
            <person name="Ono T."/>
            <person name="Yamada K."/>
            <person name="Fujii Y."/>
            <person name="Ozaki K."/>
            <person name="Hirao M."/>
            <person name="Ohmori Y."/>
            <person name="Kawabata A."/>
            <person name="Hikiji T."/>
            <person name="Kobatake N."/>
            <person name="Inagaki H."/>
            <person name="Ikema Y."/>
            <person name="Okamoto S."/>
            <person name="Okitani R."/>
            <person name="Kawakami T."/>
            <person name="Noguchi S."/>
            <person name="Itoh T."/>
            <person name="Shigeta K."/>
            <person name="Senba T."/>
            <person name="Matsumura K."/>
            <person name="Nakajima Y."/>
            <person name="Mizuno T."/>
            <person name="Morinaga M."/>
            <person name="Sasaki M."/>
            <person name="Togashi T."/>
            <person name="Oyama M."/>
            <person name="Hata H."/>
            <person name="Watanabe M."/>
            <person name="Komatsu T."/>
            <person name="Mizushima-Sugano J."/>
            <person name="Satoh T."/>
            <person name="Shirai Y."/>
            <person name="Takahashi Y."/>
            <person name="Nakagawa K."/>
            <person name="Okumura K."/>
            <person name="Nagase T."/>
            <person name="Nomura N."/>
            <person name="Kikuchi H."/>
            <person name="Masuho Y."/>
            <person name="Yamashita R."/>
            <person name="Nakai K."/>
            <person name="Yada T."/>
            <person name="Nakamura Y."/>
            <person name="Ohara O."/>
            <person name="Isogai T."/>
            <person name="Sugano S."/>
        </authorList>
    </citation>
    <scope>NUCLEOTIDE SEQUENCE [LARGE SCALE MRNA] (ISOFORM 2)</scope>
</reference>
<reference key="6">
    <citation type="journal article" date="2004" name="Nature">
        <title>The DNA sequence and biology of human chromosome 19.</title>
        <authorList>
            <person name="Grimwood J."/>
            <person name="Gordon L.A."/>
            <person name="Olsen A.S."/>
            <person name="Terry A."/>
            <person name="Schmutz J."/>
            <person name="Lamerdin J.E."/>
            <person name="Hellsten U."/>
            <person name="Goodstein D."/>
            <person name="Couronne O."/>
            <person name="Tran-Gyamfi M."/>
            <person name="Aerts A."/>
            <person name="Altherr M."/>
            <person name="Ashworth L."/>
            <person name="Bajorek E."/>
            <person name="Black S."/>
            <person name="Branscomb E."/>
            <person name="Caenepeel S."/>
            <person name="Carrano A.V."/>
            <person name="Caoile C."/>
            <person name="Chan Y.M."/>
            <person name="Christensen M."/>
            <person name="Cleland C.A."/>
            <person name="Copeland A."/>
            <person name="Dalin E."/>
            <person name="Dehal P."/>
            <person name="Denys M."/>
            <person name="Detter J.C."/>
            <person name="Escobar J."/>
            <person name="Flowers D."/>
            <person name="Fotopulos D."/>
            <person name="Garcia C."/>
            <person name="Georgescu A.M."/>
            <person name="Glavina T."/>
            <person name="Gomez M."/>
            <person name="Gonzales E."/>
            <person name="Groza M."/>
            <person name="Hammon N."/>
            <person name="Hawkins T."/>
            <person name="Haydu L."/>
            <person name="Ho I."/>
            <person name="Huang W."/>
            <person name="Israni S."/>
            <person name="Jett J."/>
            <person name="Kadner K."/>
            <person name="Kimball H."/>
            <person name="Kobayashi A."/>
            <person name="Larionov V."/>
            <person name="Leem S.-H."/>
            <person name="Lopez F."/>
            <person name="Lou Y."/>
            <person name="Lowry S."/>
            <person name="Malfatti S."/>
            <person name="Martinez D."/>
            <person name="McCready P.M."/>
            <person name="Medina C."/>
            <person name="Morgan J."/>
            <person name="Nelson K."/>
            <person name="Nolan M."/>
            <person name="Ovcharenko I."/>
            <person name="Pitluck S."/>
            <person name="Pollard M."/>
            <person name="Popkie A.P."/>
            <person name="Predki P."/>
            <person name="Quan G."/>
            <person name="Ramirez L."/>
            <person name="Rash S."/>
            <person name="Retterer J."/>
            <person name="Rodriguez A."/>
            <person name="Rogers S."/>
            <person name="Salamov A."/>
            <person name="Salazar A."/>
            <person name="She X."/>
            <person name="Smith D."/>
            <person name="Slezak T."/>
            <person name="Solovyev V."/>
            <person name="Thayer N."/>
            <person name="Tice H."/>
            <person name="Tsai M."/>
            <person name="Ustaszewska A."/>
            <person name="Vo N."/>
            <person name="Wagner M."/>
            <person name="Wheeler J."/>
            <person name="Wu K."/>
            <person name="Xie G."/>
            <person name="Yang J."/>
            <person name="Dubchak I."/>
            <person name="Furey T.S."/>
            <person name="DeJong P."/>
            <person name="Dickson M."/>
            <person name="Gordon D."/>
            <person name="Eichler E.E."/>
            <person name="Pennacchio L.A."/>
            <person name="Richardson P."/>
            <person name="Stubbs L."/>
            <person name="Rokhsar D.S."/>
            <person name="Myers R.M."/>
            <person name="Rubin E.M."/>
            <person name="Lucas S.M."/>
        </authorList>
    </citation>
    <scope>NUCLEOTIDE SEQUENCE [LARGE SCALE GENOMIC DNA]</scope>
</reference>
<reference key="7">
    <citation type="journal article" date="2004" name="Genome Res.">
        <title>The status, quality, and expansion of the NIH full-length cDNA project: the Mammalian Gene Collection (MGC).</title>
        <authorList>
            <consortium name="The MGC Project Team"/>
        </authorList>
    </citation>
    <scope>NUCLEOTIDE SEQUENCE [LARGE SCALE MRNA] (ISOFORM 1)</scope>
    <source>
        <tissue>Prostate</tissue>
    </source>
</reference>
<reference key="8">
    <citation type="journal article" date="2003" name="Biochem. J.">
        <title>Characterization of a potent human interleukin-11 agonist.</title>
        <authorList>
            <person name="Harmegnies D."/>
            <person name="Wang X.M."/>
            <person name="Vandenbussche P."/>
            <person name="Leon A."/>
            <person name="Vusio P."/>
            <person name="Groetzinger J."/>
            <person name="Jacques Y."/>
            <person name="Goormaghtigh E."/>
            <person name="Devreese B."/>
            <person name="Content J."/>
        </authorList>
    </citation>
    <scope>FUNCTION</scope>
    <scope>SUBUNIT</scope>
    <scope>MUTAGENESIS OF HIS-182 AND ASP-186</scope>
</reference>
<reference key="9">
    <citation type="journal article" date="2018" name="Sci. Signal.">
        <title>Soluble gp130 prevents interleukin-6 and interleukin-11 cluster signaling but not intracellular autocrine responses.</title>
        <authorList>
            <person name="Lamertz L."/>
            <person name="Rummel F."/>
            <person name="Polz R."/>
            <person name="Baran P."/>
            <person name="Hansen S."/>
            <person name="Waetzig G.H."/>
            <person name="Moll J.M."/>
            <person name="Floss D.M."/>
            <person name="Scheller J."/>
        </authorList>
    </citation>
    <scope>FUNCTION</scope>
    <scope>SUBUNIT</scope>
</reference>
<reference key="10">
    <citation type="journal article" date="2014" name="Acta Crystallogr. D">
        <title>The structure of human interleukin-11 reveals receptor-binding site features and structural differences from interleukin-6.</title>
        <authorList>
            <person name="Putoczki T.L."/>
            <person name="Dobson R.C."/>
            <person name="Griffin M.D.W."/>
        </authorList>
    </citation>
    <scope>X-RAY CRYSTALLOGRAPHY (2.09 ANGSTROMS) OF 23-199</scope>
</reference>
<comment type="function">
    <text evidence="1 3 5 6">Cytokine that stimulates the proliferation of hematopoietic stem cells and megakaryocyte progenitor cells and induces megakaryocyte maturation resulting in increased platelet production (PubMed:2145578). Also promotes the proliferation of hepatocytes in response to liver damage. Binding to its receptor formed by IL6ST and IL11RA activates a signaling cascade that promotes cell proliferation (PubMed:12919066). Signaling leads to the activation of intracellular protein kinases and the phosphorylation of STAT3. The interaction with the membrane-bound IL11RA and IL6ST stimulates 'classic signaling', whereas the binding of IL11 and soluble IL11RA to IL6ST stimulates 'trans-signaling' (PubMed:30279168).</text>
</comment>
<comment type="subunit">
    <text evidence="3 6">Interacts with IL11RA to associate with IL6ST, giving rise to a multimeric signaling complex.</text>
</comment>
<comment type="interaction">
    <interactant intactId="EBI-751694">
        <id>P20809</id>
    </interactant>
    <interactant intactId="EBI-739552">
        <id>P43364</id>
        <label>MAGEA11</label>
    </interactant>
    <organismsDiffer>false</organismsDiffer>
    <experiments>4</experiments>
</comment>
<comment type="interaction">
    <interactant intactId="EBI-751694">
        <id>P20809</id>
    </interactant>
    <interactant intactId="EBI-10178634">
        <id>P43364-2</id>
        <label>MAGEA11</label>
    </interactant>
    <organismsDiffer>false</organismsDiffer>
    <experiments>3</experiments>
</comment>
<comment type="interaction">
    <interactant intactId="EBI-751694">
        <id>P20809</id>
    </interactant>
    <interactant intactId="EBI-743700">
        <id>P25815</id>
        <label>S100P</label>
    </interactant>
    <organismsDiffer>false</organismsDiffer>
    <experiments>2</experiments>
</comment>
<comment type="interaction">
    <interactant intactId="EBI-751694">
        <id>P20809</id>
    </interactant>
    <interactant intactId="EBI-947187">
        <id>Q9UHD9</id>
        <label>UBQLN2</label>
    </interactant>
    <organismsDiffer>false</organismsDiffer>
    <experiments>3</experiments>
</comment>
<comment type="subcellular location">
    <subcellularLocation>
        <location evidence="4 5">Secreted</location>
    </subcellularLocation>
</comment>
<comment type="alternative products">
    <event type="alternative splicing"/>
    <isoform>
        <id>P20809-1</id>
        <name>1</name>
        <sequence type="displayed"/>
    </isoform>
    <isoform>
        <id>P20809-2</id>
        <name>2</name>
        <sequence type="described" ref="VSP_046936"/>
    </isoform>
</comment>
<comment type="pharmaceutical">
    <text>Available under the name Neumega (Wyeth). Used for the prevention of severe thrombocytopenia and the reduction of the need for platelet transfusion following myelosuppressive chemotherapy.</text>
</comment>
<comment type="similarity">
    <text evidence="10">Belongs to the IL-6 superfamily.</text>
</comment>
<comment type="online information" name="Wikipedia">
    <link uri="https://en.wikipedia.org/wiki/Interleukin_11"/>
    <text>Interleukin-11 entry</text>
</comment>
<name>IL11_HUMAN</name>
<dbReference type="EMBL" id="M57765">
    <property type="protein sequence ID" value="AAA59132.1"/>
    <property type="molecule type" value="mRNA"/>
</dbReference>
<dbReference type="EMBL" id="X58377">
    <property type="protein sequence ID" value="CAA41266.1"/>
    <property type="molecule type" value="mRNA"/>
</dbReference>
<dbReference type="EMBL" id="AY207429">
    <property type="protein sequence ID" value="AAO13493.1"/>
    <property type="molecule type" value="Genomic_DNA"/>
</dbReference>
<dbReference type="EMBL" id="AK298973">
    <property type="protein sequence ID" value="BAG61067.1"/>
    <property type="molecule type" value="mRNA"/>
</dbReference>
<dbReference type="EMBL" id="AC020922">
    <property type="status" value="NOT_ANNOTATED_CDS"/>
    <property type="molecule type" value="Genomic_DNA"/>
</dbReference>
<dbReference type="EMBL" id="BC012506">
    <property type="protein sequence ID" value="AAH12506.1"/>
    <property type="molecule type" value="mRNA"/>
</dbReference>
<dbReference type="CCDS" id="CCDS12923.1">
    <molecule id="P20809-1"/>
</dbReference>
<dbReference type="CCDS" id="CCDS59423.1">
    <molecule id="P20809-2"/>
</dbReference>
<dbReference type="PIR" id="A42830">
    <property type="entry name" value="B38285"/>
</dbReference>
<dbReference type="RefSeq" id="NP_000632.1">
    <molecule id="P20809-1"/>
    <property type="nucleotide sequence ID" value="NM_000641.4"/>
</dbReference>
<dbReference type="RefSeq" id="NP_001254647.1">
    <molecule id="P20809-2"/>
    <property type="nucleotide sequence ID" value="NM_001267718.2"/>
</dbReference>
<dbReference type="PDB" id="4MHL">
    <property type="method" value="X-ray"/>
    <property type="resolution" value="2.09 A"/>
    <property type="chains" value="A=23-199"/>
</dbReference>
<dbReference type="PDB" id="6O4O">
    <property type="method" value="X-ray"/>
    <property type="resolution" value="1.62 A"/>
    <property type="chains" value="A=32-199"/>
</dbReference>
<dbReference type="PDB" id="8DPS">
    <property type="method" value="EM"/>
    <property type="resolution" value="3.47 A"/>
    <property type="chains" value="B/E=32-199"/>
</dbReference>
<dbReference type="PDB" id="8DPT">
    <property type="method" value="EM"/>
    <property type="resolution" value="4.00 A"/>
    <property type="chains" value="B/E=32-199"/>
</dbReference>
<dbReference type="PDB" id="8DPU">
    <property type="method" value="X-ray"/>
    <property type="resolution" value="3.78 A"/>
    <property type="chains" value="B/E/H/K/N/Q=22-199"/>
</dbReference>
<dbReference type="PDB" id="8DPV">
    <property type="method" value="X-ray"/>
    <property type="resolution" value="1.48 A"/>
    <property type="chains" value="A=32-199"/>
</dbReference>
<dbReference type="PDB" id="8DPW">
    <property type="method" value="X-ray"/>
    <property type="resolution" value="1.80 A"/>
    <property type="chains" value="A=32-199"/>
</dbReference>
<dbReference type="PDB" id="8QY4">
    <property type="method" value="EM"/>
    <property type="resolution" value="3.06 A"/>
    <property type="chains" value="A/D=1-199"/>
</dbReference>
<dbReference type="PDBsum" id="4MHL"/>
<dbReference type="PDBsum" id="6O4O"/>
<dbReference type="PDBsum" id="8DPS"/>
<dbReference type="PDBsum" id="8DPT"/>
<dbReference type="PDBsum" id="8DPU"/>
<dbReference type="PDBsum" id="8DPV"/>
<dbReference type="PDBsum" id="8DPW"/>
<dbReference type="PDBsum" id="8QY4"/>
<dbReference type="EMDB" id="EMD-18741"/>
<dbReference type="EMDB" id="EMD-27641"/>
<dbReference type="EMDB" id="EMD-27642"/>
<dbReference type="SASBDB" id="P20809"/>
<dbReference type="SMR" id="P20809"/>
<dbReference type="BioGRID" id="109803">
    <property type="interactions" value="13"/>
</dbReference>
<dbReference type="ComplexPortal" id="CPX-9721">
    <property type="entry name" value="Interleukin 11-sIL11RA-IL-6ST receptor-ligand trans-signalling complex"/>
</dbReference>
<dbReference type="ComplexPortal" id="CPX-9781">
    <property type="entry name" value="Interleukin 11-mIL11RA-IL-6ST receptor-ligand complex"/>
</dbReference>
<dbReference type="ComplexPortal" id="CPX-9801">
    <property type="entry name" value="IL11-sIL11RA-sIL-6ST receptor-ligand buffering complex"/>
</dbReference>
<dbReference type="CORUM" id="P20809"/>
<dbReference type="DIP" id="DIP-3775N"/>
<dbReference type="FunCoup" id="P20809">
    <property type="interactions" value="485"/>
</dbReference>
<dbReference type="IntAct" id="P20809">
    <property type="interactions" value="4"/>
</dbReference>
<dbReference type="STRING" id="9606.ENSP00000264563"/>
<dbReference type="iPTMnet" id="P20809"/>
<dbReference type="PhosphoSitePlus" id="P20809"/>
<dbReference type="BioMuta" id="IL11"/>
<dbReference type="DMDM" id="124294"/>
<dbReference type="MassIVE" id="P20809"/>
<dbReference type="PaxDb" id="9606-ENSP00000264563"/>
<dbReference type="PeptideAtlas" id="P20809"/>
<dbReference type="ProteomicsDB" id="53795">
    <molecule id="P20809-1"/>
</dbReference>
<dbReference type="Antibodypedia" id="19559">
    <property type="antibodies" value="486 antibodies from 37 providers"/>
</dbReference>
<dbReference type="DNASU" id="3589"/>
<dbReference type="Ensembl" id="ENST00000264563.7">
    <molecule id="P20809-1"/>
    <property type="protein sequence ID" value="ENSP00000264563.1"/>
    <property type="gene ID" value="ENSG00000095752.7"/>
</dbReference>
<dbReference type="Ensembl" id="ENST00000585513.1">
    <molecule id="P20809-1"/>
    <property type="protein sequence ID" value="ENSP00000467355.1"/>
    <property type="gene ID" value="ENSG00000095752.7"/>
</dbReference>
<dbReference type="Ensembl" id="ENST00000590625.5">
    <molecule id="P20809-2"/>
    <property type="protein sequence ID" value="ENSP00000465705.1"/>
    <property type="gene ID" value="ENSG00000095752.7"/>
</dbReference>
<dbReference type="GeneID" id="3589"/>
<dbReference type="KEGG" id="hsa:3589"/>
<dbReference type="MANE-Select" id="ENST00000264563.7">
    <property type="protein sequence ID" value="ENSP00000264563.1"/>
    <property type="RefSeq nucleotide sequence ID" value="NM_000641.4"/>
    <property type="RefSeq protein sequence ID" value="NP_000632.1"/>
</dbReference>
<dbReference type="UCSC" id="uc002qks.3">
    <molecule id="P20809-1"/>
    <property type="organism name" value="human"/>
</dbReference>
<dbReference type="AGR" id="HGNC:5966"/>
<dbReference type="CTD" id="3589"/>
<dbReference type="DisGeNET" id="3589"/>
<dbReference type="GeneCards" id="IL11"/>
<dbReference type="HGNC" id="HGNC:5966">
    <property type="gene designation" value="IL11"/>
</dbReference>
<dbReference type="HPA" id="ENSG00000095752">
    <property type="expression patterns" value="Tissue enhanced (brain)"/>
</dbReference>
<dbReference type="MIM" id="147681">
    <property type="type" value="gene"/>
</dbReference>
<dbReference type="neXtProt" id="NX_P20809"/>
<dbReference type="OpenTargets" id="ENSG00000095752"/>
<dbReference type="PharmGKB" id="PA29781"/>
<dbReference type="VEuPathDB" id="HostDB:ENSG00000095752"/>
<dbReference type="eggNOG" id="ENOG502RZVA">
    <property type="taxonomic scope" value="Eukaryota"/>
</dbReference>
<dbReference type="GeneTree" id="ENSGT00390000007165"/>
<dbReference type="HOGENOM" id="CLU_119797_0_0_1"/>
<dbReference type="InParanoid" id="P20809"/>
<dbReference type="OMA" id="LLCYLWH"/>
<dbReference type="OrthoDB" id="9445483at2759"/>
<dbReference type="PAN-GO" id="P20809">
    <property type="GO annotations" value="5 GO annotations based on evolutionary models"/>
</dbReference>
<dbReference type="PhylomeDB" id="P20809"/>
<dbReference type="TreeFam" id="TF337294"/>
<dbReference type="PathwayCommons" id="P20809"/>
<dbReference type="Reactome" id="R-HSA-6788467">
    <property type="pathway name" value="IL-6-type cytokine receptor ligand interactions"/>
</dbReference>
<dbReference type="SignaLink" id="P20809"/>
<dbReference type="SIGNOR" id="P20809"/>
<dbReference type="BioGRID-ORCS" id="3589">
    <property type="hits" value="11 hits in 1142 CRISPR screens"/>
</dbReference>
<dbReference type="ChiTaRS" id="IL11">
    <property type="organism name" value="human"/>
</dbReference>
<dbReference type="EvolutionaryTrace" id="P20809"/>
<dbReference type="GeneWiki" id="Interleukin_11"/>
<dbReference type="GenomeRNAi" id="3589"/>
<dbReference type="Pharos" id="P20809">
    <property type="development level" value="Tbio"/>
</dbReference>
<dbReference type="PRO" id="PR:P20809"/>
<dbReference type="Proteomes" id="UP000005640">
    <property type="component" value="Chromosome 19"/>
</dbReference>
<dbReference type="RNAct" id="P20809">
    <property type="molecule type" value="protein"/>
</dbReference>
<dbReference type="Bgee" id="ENSG00000095752">
    <property type="expression patterns" value="Expressed in islet of Langerhans and 121 other cell types or tissues"/>
</dbReference>
<dbReference type="ExpressionAtlas" id="P20809">
    <property type="expression patterns" value="baseline and differential"/>
</dbReference>
<dbReference type="GO" id="GO:0005737">
    <property type="term" value="C:cytoplasm"/>
    <property type="evidence" value="ECO:0000318"/>
    <property type="project" value="GO_Central"/>
</dbReference>
<dbReference type="GO" id="GO:0005576">
    <property type="term" value="C:extracellular region"/>
    <property type="evidence" value="ECO:0000304"/>
    <property type="project" value="Reactome"/>
</dbReference>
<dbReference type="GO" id="GO:0005615">
    <property type="term" value="C:extracellular space"/>
    <property type="evidence" value="ECO:0000314"/>
    <property type="project" value="UniProt"/>
</dbReference>
<dbReference type="GO" id="GO:0005125">
    <property type="term" value="F:cytokine activity"/>
    <property type="evidence" value="ECO:0000314"/>
    <property type="project" value="UniProt"/>
</dbReference>
<dbReference type="GO" id="GO:0008083">
    <property type="term" value="F:growth factor activity"/>
    <property type="evidence" value="ECO:0000314"/>
    <property type="project" value="UniProtKB"/>
</dbReference>
<dbReference type="GO" id="GO:0005142">
    <property type="term" value="F:interleukin-11 receptor binding"/>
    <property type="evidence" value="ECO:0000303"/>
    <property type="project" value="UniProtKB"/>
</dbReference>
<dbReference type="GO" id="GO:0030183">
    <property type="term" value="P:B cell differentiation"/>
    <property type="evidence" value="ECO:0000303"/>
    <property type="project" value="UniProtKB"/>
</dbReference>
<dbReference type="GO" id="GO:0008283">
    <property type="term" value="P:cell population proliferation"/>
    <property type="evidence" value="ECO:0007669"/>
    <property type="project" value="Ensembl"/>
</dbReference>
<dbReference type="GO" id="GO:0045444">
    <property type="term" value="P:fat cell differentiation"/>
    <property type="evidence" value="ECO:0000303"/>
    <property type="project" value="UniProtKB"/>
</dbReference>
<dbReference type="GO" id="GO:0038154">
    <property type="term" value="P:interleukin-11-mediated signaling pathway"/>
    <property type="evidence" value="ECO:0000314"/>
    <property type="project" value="UniProt"/>
</dbReference>
<dbReference type="GO" id="GO:0030219">
    <property type="term" value="P:megakaryocyte differentiation"/>
    <property type="evidence" value="ECO:0000303"/>
    <property type="project" value="UniProtKB"/>
</dbReference>
<dbReference type="GO" id="GO:0046888">
    <property type="term" value="P:negative regulation of hormone secretion"/>
    <property type="evidence" value="ECO:0000314"/>
    <property type="project" value="MGI"/>
</dbReference>
<dbReference type="GO" id="GO:0008284">
    <property type="term" value="P:positive regulation of cell population proliferation"/>
    <property type="evidence" value="ECO:0000314"/>
    <property type="project" value="UniProtKB"/>
</dbReference>
<dbReference type="GO" id="GO:0043410">
    <property type="term" value="P:positive regulation of MAPK cascade"/>
    <property type="evidence" value="ECO:0000314"/>
    <property type="project" value="MGI"/>
</dbReference>
<dbReference type="GO" id="GO:0033138">
    <property type="term" value="P:positive regulation of peptidyl-serine phosphorylation"/>
    <property type="evidence" value="ECO:0000314"/>
    <property type="project" value="MGI"/>
</dbReference>
<dbReference type="GO" id="GO:0050731">
    <property type="term" value="P:positive regulation of peptidyl-tyrosine phosphorylation"/>
    <property type="evidence" value="ECO:0000314"/>
    <property type="project" value="MGI"/>
</dbReference>
<dbReference type="GO" id="GO:0045944">
    <property type="term" value="P:positive regulation of transcription by RNA polymerase II"/>
    <property type="evidence" value="ECO:0000314"/>
    <property type="project" value="MGI"/>
</dbReference>
<dbReference type="FunFam" id="1.20.1250.10:FF:000017">
    <property type="entry name" value="Interleukin 11"/>
    <property type="match status" value="1"/>
</dbReference>
<dbReference type="Gene3D" id="1.20.1250.10">
    <property type="match status" value="1"/>
</dbReference>
<dbReference type="InterPro" id="IPR009079">
    <property type="entry name" value="4_helix_cytokine-like_core"/>
</dbReference>
<dbReference type="InterPro" id="IPR020438">
    <property type="entry name" value="IL-11"/>
</dbReference>
<dbReference type="InterPro" id="IPR020412">
    <property type="entry name" value="IL-11_mml"/>
</dbReference>
<dbReference type="PANTHER" id="PTHR16922">
    <property type="entry name" value="INTERLEUKIN 11"/>
    <property type="match status" value="1"/>
</dbReference>
<dbReference type="PANTHER" id="PTHR16922:SF0">
    <property type="entry name" value="INTERLEUKIN-11"/>
    <property type="match status" value="1"/>
</dbReference>
<dbReference type="Pfam" id="PF07400">
    <property type="entry name" value="IL11"/>
    <property type="match status" value="1"/>
</dbReference>
<dbReference type="PRINTS" id="PR01943">
    <property type="entry name" value="INTLKN11MAML"/>
</dbReference>
<dbReference type="PRINTS" id="PR01927">
    <property type="entry name" value="INTRLEUKIN11"/>
</dbReference>
<dbReference type="SUPFAM" id="SSF47266">
    <property type="entry name" value="4-helical cytokines"/>
    <property type="match status" value="1"/>
</dbReference>
<gene>
    <name evidence="11" type="primary">IL11</name>
</gene>
<sequence>MNCVCRLVLVVLSLWPDTAVAPGPPPGPPRVSPDPRAELDSTVLLTRSLLADTRQLAAQLRDKFPADGDHNLDSLPTLAMSAGALGALQLPGVLTRLRADLLSYLRHVQWLRRAGGSSLKTLEPELGTLQARLDRLLRRLQLLMSRLALPQPPPDPPAPPLAPPSSAWGGIRAAHAILGGLHLTLDWAVRGLLLLKTRL</sequence>
<organism>
    <name type="scientific">Homo sapiens</name>
    <name type="common">Human</name>
    <dbReference type="NCBI Taxonomy" id="9606"/>
    <lineage>
        <taxon>Eukaryota</taxon>
        <taxon>Metazoa</taxon>
        <taxon>Chordata</taxon>
        <taxon>Craniata</taxon>
        <taxon>Vertebrata</taxon>
        <taxon>Euteleostomi</taxon>
        <taxon>Mammalia</taxon>
        <taxon>Eutheria</taxon>
        <taxon>Euarchontoglires</taxon>
        <taxon>Primates</taxon>
        <taxon>Haplorrhini</taxon>
        <taxon>Catarrhini</taxon>
        <taxon>Hominidae</taxon>
        <taxon>Homo</taxon>
    </lineage>
</organism>
<feature type="signal peptide" evidence="2">
    <location>
        <begin position="1"/>
        <end position="21"/>
    </location>
</feature>
<feature type="chain" id="PRO_0000015618" description="Interleukin-11">
    <location>
        <begin position="22"/>
        <end position="199"/>
    </location>
</feature>
<feature type="region of interest" description="Important for interaction with IL11RA and for the stimulation of cell proliferation" evidence="10">
    <location>
        <begin position="182"/>
        <end position="190"/>
    </location>
</feature>
<feature type="site" description="Important for interaction with IL6ST and for the stimulation of cell proliferation" evidence="1">
    <location>
        <position position="168"/>
    </location>
</feature>
<feature type="splice variant" id="VSP_046936" description="In isoform 2." evidence="8">
    <location>
        <begin position="1"/>
        <end position="79"/>
    </location>
</feature>
<feature type="sequence variant" id="VAR_016313" description="In dbSNP:rs4252576." evidence="7">
    <original>V</original>
    <variation>M</variation>
    <location>
        <position position="108"/>
    </location>
</feature>
<feature type="sequence variant" id="VAR_016314" description="In dbSNP:rs4252548." evidence="7">
    <original>R</original>
    <variation>H</variation>
    <location>
        <position position="112"/>
    </location>
</feature>
<feature type="mutagenesis site" description="Increases affinity for IL11RA and stimulation of cell proliferation." evidence="3">
    <original>H</original>
    <variation>V</variation>
    <location>
        <position position="182"/>
    </location>
</feature>
<feature type="mutagenesis site" description="Strongly increases affinity for IL11RA and stimulation of cell proliferation." evidence="3">
    <original>D</original>
    <variation>A</variation>
    <location>
        <position position="186"/>
    </location>
</feature>
<feature type="mutagenesis site" description="Increases affinity for IL11RA and stimulation of cell proliferation." evidence="3">
    <original>D</original>
    <variation>V</variation>
    <location>
        <position position="186"/>
    </location>
</feature>
<feature type="sequence conflict" description="In Ref. 7; AAH12506." evidence="10" ref="7">
    <original>H</original>
    <variation>L</variation>
    <location>
        <position position="175"/>
    </location>
</feature>
<feature type="helix" evidence="12">
    <location>
        <begin position="35"/>
        <end position="63"/>
    </location>
</feature>
<feature type="helix" evidence="13">
    <location>
        <begin position="72"/>
        <end position="74"/>
    </location>
</feature>
<feature type="helix" evidence="14">
    <location>
        <begin position="82"/>
        <end position="85"/>
    </location>
</feature>
<feature type="helix" evidence="12">
    <location>
        <begin position="87"/>
        <end position="89"/>
    </location>
</feature>
<feature type="helix" evidence="12">
    <location>
        <begin position="90"/>
        <end position="114"/>
    </location>
</feature>
<feature type="helix" evidence="12">
    <location>
        <begin position="117"/>
        <end position="122"/>
    </location>
</feature>
<feature type="helix" evidence="12">
    <location>
        <begin position="125"/>
        <end position="146"/>
    </location>
</feature>
<feature type="helix" evidence="12">
    <location>
        <begin position="167"/>
        <end position="196"/>
    </location>
</feature>
<accession>P20809</accession>
<accession>B4DQV5</accession>
<accession>Q96EB4</accession>
<protein>
    <recommendedName>
        <fullName evidence="10">Interleukin-11</fullName>
        <shortName>IL-11</shortName>
    </recommendedName>
    <alternativeName>
        <fullName evidence="9">Adipogenesis inhibitory factor</fullName>
        <shortName evidence="9">AGIF</shortName>
    </alternativeName>
    <innName>Oprelvekin</innName>
</protein>